<reference key="1">
    <citation type="journal article" date="2008" name="Nucleic Acids Res.">
        <title>The complete nucleotide sequences of the five genetically distinct plastid genomes of Oenothera, subsection Oenothera: I. Sequence evaluation and plastome evolution.</title>
        <authorList>
            <person name="Greiner S."/>
            <person name="Wang X."/>
            <person name="Rauwolf U."/>
            <person name="Silber M.V."/>
            <person name="Mayer K."/>
            <person name="Meurer J."/>
            <person name="Haberer G."/>
            <person name="Herrmann R.G."/>
        </authorList>
    </citation>
    <scope>NUCLEOTIDE SEQUENCE [LARGE SCALE GENOMIC DNA]</scope>
    <source>
        <strain>cv. Atrovirens</strain>
    </source>
</reference>
<keyword id="KW-0066">ATP synthesis</keyword>
<keyword id="KW-0138">CF(0)</keyword>
<keyword id="KW-0150">Chloroplast</keyword>
<keyword id="KW-0375">Hydrogen ion transport</keyword>
<keyword id="KW-0406">Ion transport</keyword>
<keyword id="KW-0472">Membrane</keyword>
<keyword id="KW-0934">Plastid</keyword>
<keyword id="KW-0793">Thylakoid</keyword>
<keyword id="KW-0812">Transmembrane</keyword>
<keyword id="KW-1133">Transmembrane helix</keyword>
<keyword id="KW-0813">Transport</keyword>
<comment type="function">
    <text evidence="1">Key component of the proton channel; it plays a direct role in the translocation of protons across the membrane.</text>
</comment>
<comment type="subunit">
    <text evidence="1">F-type ATPases have 2 components, CF(1) - the catalytic core - and CF(0) - the membrane proton channel. CF(1) has five subunits: alpha(3), beta(3), gamma(1), delta(1), epsilon(1). CF(0) has four main subunits: a, b, b' and c.</text>
</comment>
<comment type="subcellular location">
    <subcellularLocation>
        <location evidence="1">Plastid</location>
        <location evidence="1">Chloroplast thylakoid membrane</location>
        <topology evidence="1">Multi-pass membrane protein</topology>
    </subcellularLocation>
</comment>
<comment type="similarity">
    <text evidence="1">Belongs to the ATPase A chain family.</text>
</comment>
<organism>
    <name type="scientific">Oenothera parviflora</name>
    <name type="common">Small-flowered evening primrose</name>
    <name type="synonym">Oenothera cruciata</name>
    <dbReference type="NCBI Taxonomy" id="482429"/>
    <lineage>
        <taxon>Eukaryota</taxon>
        <taxon>Viridiplantae</taxon>
        <taxon>Streptophyta</taxon>
        <taxon>Embryophyta</taxon>
        <taxon>Tracheophyta</taxon>
        <taxon>Spermatophyta</taxon>
        <taxon>Magnoliopsida</taxon>
        <taxon>eudicotyledons</taxon>
        <taxon>Gunneridae</taxon>
        <taxon>Pentapetalae</taxon>
        <taxon>rosids</taxon>
        <taxon>malvids</taxon>
        <taxon>Myrtales</taxon>
        <taxon>Onagraceae</taxon>
        <taxon>Onagroideae</taxon>
        <taxon>Onagreae</taxon>
        <taxon>Oenothera</taxon>
    </lineage>
</organism>
<evidence type="ECO:0000255" key="1">
    <source>
        <dbReference type="HAMAP-Rule" id="MF_01393"/>
    </source>
</evidence>
<accession>B0Z5D1</accession>
<geneLocation type="chloroplast"/>
<dbReference type="EMBL" id="EU262891">
    <property type="protein sequence ID" value="ABX10124.1"/>
    <property type="molecule type" value="Genomic_DNA"/>
</dbReference>
<dbReference type="RefSeq" id="YP_001687454.1">
    <property type="nucleotide sequence ID" value="NC_010362.1"/>
</dbReference>
<dbReference type="SMR" id="B0Z5D1"/>
<dbReference type="GeneID" id="5955388"/>
<dbReference type="GO" id="GO:0009535">
    <property type="term" value="C:chloroplast thylakoid membrane"/>
    <property type="evidence" value="ECO:0007669"/>
    <property type="project" value="UniProtKB-SubCell"/>
</dbReference>
<dbReference type="GO" id="GO:0005886">
    <property type="term" value="C:plasma membrane"/>
    <property type="evidence" value="ECO:0007669"/>
    <property type="project" value="UniProtKB-UniRule"/>
</dbReference>
<dbReference type="GO" id="GO:0045259">
    <property type="term" value="C:proton-transporting ATP synthase complex"/>
    <property type="evidence" value="ECO:0007669"/>
    <property type="project" value="UniProtKB-KW"/>
</dbReference>
<dbReference type="GO" id="GO:0046933">
    <property type="term" value="F:proton-transporting ATP synthase activity, rotational mechanism"/>
    <property type="evidence" value="ECO:0007669"/>
    <property type="project" value="UniProtKB-UniRule"/>
</dbReference>
<dbReference type="CDD" id="cd00310">
    <property type="entry name" value="ATP-synt_Fo_a_6"/>
    <property type="match status" value="1"/>
</dbReference>
<dbReference type="FunFam" id="1.20.120.220:FF:000001">
    <property type="entry name" value="ATP synthase subunit a, chloroplastic"/>
    <property type="match status" value="1"/>
</dbReference>
<dbReference type="Gene3D" id="1.20.120.220">
    <property type="entry name" value="ATP synthase, F0 complex, subunit A"/>
    <property type="match status" value="1"/>
</dbReference>
<dbReference type="HAMAP" id="MF_01393">
    <property type="entry name" value="ATP_synth_a_bact"/>
    <property type="match status" value="1"/>
</dbReference>
<dbReference type="InterPro" id="IPR045082">
    <property type="entry name" value="ATP_syn_F0_a_bact/chloroplast"/>
</dbReference>
<dbReference type="InterPro" id="IPR000568">
    <property type="entry name" value="ATP_synth_F0_asu"/>
</dbReference>
<dbReference type="InterPro" id="IPR023011">
    <property type="entry name" value="ATP_synth_F0_asu_AS"/>
</dbReference>
<dbReference type="InterPro" id="IPR035908">
    <property type="entry name" value="F0_ATP_A_sf"/>
</dbReference>
<dbReference type="NCBIfam" id="TIGR01131">
    <property type="entry name" value="ATP_synt_6_or_A"/>
    <property type="match status" value="1"/>
</dbReference>
<dbReference type="PANTHER" id="PTHR42823">
    <property type="entry name" value="ATP SYNTHASE SUBUNIT A, CHLOROPLASTIC"/>
    <property type="match status" value="1"/>
</dbReference>
<dbReference type="PANTHER" id="PTHR42823:SF3">
    <property type="entry name" value="ATP SYNTHASE SUBUNIT A, CHLOROPLASTIC"/>
    <property type="match status" value="1"/>
</dbReference>
<dbReference type="Pfam" id="PF00119">
    <property type="entry name" value="ATP-synt_A"/>
    <property type="match status" value="1"/>
</dbReference>
<dbReference type="PRINTS" id="PR00123">
    <property type="entry name" value="ATPASEA"/>
</dbReference>
<dbReference type="SUPFAM" id="SSF81336">
    <property type="entry name" value="F1F0 ATP synthase subunit A"/>
    <property type="match status" value="1"/>
</dbReference>
<dbReference type="PROSITE" id="PS00449">
    <property type="entry name" value="ATPASE_A"/>
    <property type="match status" value="1"/>
</dbReference>
<proteinExistence type="inferred from homology"/>
<feature type="chain" id="PRO_0000362583" description="ATP synthase subunit a, chloroplastic">
    <location>
        <begin position="1"/>
        <end position="247"/>
    </location>
</feature>
<feature type="transmembrane region" description="Helical" evidence="1">
    <location>
        <begin position="38"/>
        <end position="58"/>
    </location>
</feature>
<feature type="transmembrane region" description="Helical" evidence="1">
    <location>
        <begin position="95"/>
        <end position="115"/>
    </location>
</feature>
<feature type="transmembrane region" description="Helical" evidence="1">
    <location>
        <begin position="134"/>
        <end position="154"/>
    </location>
</feature>
<feature type="transmembrane region" description="Helical" evidence="1">
    <location>
        <begin position="199"/>
        <end position="219"/>
    </location>
</feature>
<feature type="transmembrane region" description="Helical" evidence="1">
    <location>
        <begin position="220"/>
        <end position="240"/>
    </location>
</feature>
<sequence>MDVLSCSNNTLKGLYDISGVEVGQHFYWQIGGFQVHGQVLITSWVVIAILLGSASIAVRNPQTIPNDSQNFFEYILEFIRDVSKTQIGEEYGPWVPFIGTMFLFIFVSNWSGALLPWKLVELPHGELAAPTNDINTTVALALLTSVAYFYAGLSKKGLGYFSKYIQPTPILLPINILEDFTKPLSLSFRLFGNILADELVVVVLVSLVPSVVPIPVMFLGLFTSGIQALIFATLAAAYIGESMEGHH</sequence>
<gene>
    <name evidence="1" type="primary">atpI</name>
</gene>
<protein>
    <recommendedName>
        <fullName evidence="1">ATP synthase subunit a, chloroplastic</fullName>
    </recommendedName>
    <alternativeName>
        <fullName evidence="1">ATP synthase F0 sector subunit a</fullName>
    </alternativeName>
    <alternativeName>
        <fullName evidence="1">F-ATPase subunit IV</fullName>
    </alternativeName>
</protein>
<name>ATPI_OENPA</name>